<reference key="1">
    <citation type="journal article" date="1992" name="Nature">
        <title>The complete DNA sequence of yeast chromosome III.</title>
        <authorList>
            <person name="Oliver S.G."/>
            <person name="van der Aart Q.J.M."/>
            <person name="Agostoni-Carbone M.L."/>
            <person name="Aigle M."/>
            <person name="Alberghina L."/>
            <person name="Alexandraki D."/>
            <person name="Antoine G."/>
            <person name="Anwar R."/>
            <person name="Ballesta J.P.G."/>
            <person name="Benit P."/>
            <person name="Berben G."/>
            <person name="Bergantino E."/>
            <person name="Biteau N."/>
            <person name="Bolle P.-A."/>
            <person name="Bolotin-Fukuhara M."/>
            <person name="Brown A."/>
            <person name="Brown A.J.P."/>
            <person name="Buhler J.-M."/>
            <person name="Carcano C."/>
            <person name="Carignani G."/>
            <person name="Cederberg H."/>
            <person name="Chanet R."/>
            <person name="Contreras R."/>
            <person name="Crouzet M."/>
            <person name="Daignan-Fornier B."/>
            <person name="Defoor E."/>
            <person name="Delgado M.D."/>
            <person name="Demolder J."/>
            <person name="Doira C."/>
            <person name="Dubois E."/>
            <person name="Dujon B."/>
            <person name="Duesterhoeft A."/>
            <person name="Erdmann D."/>
            <person name="Esteban M."/>
            <person name="Fabre F."/>
            <person name="Fairhead C."/>
            <person name="Faye G."/>
            <person name="Feldmann H."/>
            <person name="Fiers W."/>
            <person name="Francingues-Gaillard M.-C."/>
            <person name="Franco L."/>
            <person name="Frontali L."/>
            <person name="Fukuhara H."/>
            <person name="Fuller L.J."/>
            <person name="Galland P."/>
            <person name="Gent M.E."/>
            <person name="Gigot D."/>
            <person name="Gilliquet V."/>
            <person name="Glansdorff N."/>
            <person name="Goffeau A."/>
            <person name="Grenson M."/>
            <person name="Grisanti P."/>
            <person name="Grivell L.A."/>
            <person name="de Haan M."/>
            <person name="Haasemann M."/>
            <person name="Hatat D."/>
            <person name="Hoenicka J."/>
            <person name="Hegemann J.H."/>
            <person name="Herbert C.J."/>
            <person name="Hilger F."/>
            <person name="Hohmann S."/>
            <person name="Hollenberg C.P."/>
            <person name="Huse K."/>
            <person name="Iborra F."/>
            <person name="Indge K.J."/>
            <person name="Isono K."/>
            <person name="Jacq C."/>
            <person name="Jacquet M."/>
            <person name="James C.M."/>
            <person name="Jauniaux J.-C."/>
            <person name="Jia Y."/>
            <person name="Jimenez A."/>
            <person name="Kelly A."/>
            <person name="Kleinhans U."/>
            <person name="Kreisl P."/>
            <person name="Lanfranchi G."/>
            <person name="Lewis C."/>
            <person name="van der Linden C.G."/>
            <person name="Lucchini G."/>
            <person name="Lutzenkirchen K."/>
            <person name="Maat M.J."/>
            <person name="Mallet L."/>
            <person name="Mannhaupt G."/>
            <person name="Martegani E."/>
            <person name="Mathieu A."/>
            <person name="Maurer C.T.C."/>
            <person name="McConnell D."/>
            <person name="McKee R.A."/>
            <person name="Messenguy F."/>
            <person name="Mewes H.-W."/>
            <person name="Molemans F."/>
            <person name="Montague M.A."/>
            <person name="Muzi Falconi M."/>
            <person name="Navas L."/>
            <person name="Newlon C.S."/>
            <person name="Noone D."/>
            <person name="Pallier C."/>
            <person name="Panzeri L."/>
            <person name="Pearson B.M."/>
            <person name="Perea J."/>
            <person name="Philippsen P."/>
            <person name="Pierard A."/>
            <person name="Planta R.J."/>
            <person name="Plevani P."/>
            <person name="Poetsch B."/>
            <person name="Pohl F.M."/>
            <person name="Purnelle B."/>
            <person name="Ramezani Rad M."/>
            <person name="Rasmussen S.W."/>
            <person name="Raynal A."/>
            <person name="Remacha M.A."/>
            <person name="Richterich P."/>
            <person name="Roberts A.B."/>
            <person name="Rodriguez F."/>
            <person name="Sanz E."/>
            <person name="Schaaff-Gerstenschlaeger I."/>
            <person name="Scherens B."/>
            <person name="Schweitzer B."/>
            <person name="Shu Y."/>
            <person name="Skala J."/>
            <person name="Slonimski P.P."/>
            <person name="Sor F."/>
            <person name="Soustelle C."/>
            <person name="Spiegelberg R."/>
            <person name="Stateva L.I."/>
            <person name="Steensma H.Y."/>
            <person name="Steiner S."/>
            <person name="Thierry A."/>
            <person name="Thireos G."/>
            <person name="Tzermia M."/>
            <person name="Urrestarazu L.A."/>
            <person name="Valle G."/>
            <person name="Vetter I."/>
            <person name="van Vliet-Reedijk J.C."/>
            <person name="Voet M."/>
            <person name="Volckaert G."/>
            <person name="Vreken P."/>
            <person name="Wang H."/>
            <person name="Warmington J.R."/>
            <person name="von Wettstein D."/>
            <person name="Wicksteed B.L."/>
            <person name="Wilson C."/>
            <person name="Wurst H."/>
            <person name="Xu G."/>
            <person name="Yoshikawa A."/>
            <person name="Zimmermann F.K."/>
            <person name="Sgouros J.G."/>
        </authorList>
    </citation>
    <scope>NUCLEOTIDE SEQUENCE [LARGE SCALE GENOMIC DNA]</scope>
    <source>
        <strain>ATCC 204508 / S288c</strain>
    </source>
</reference>
<reference key="2">
    <citation type="journal article" date="2014" name="G3 (Bethesda)">
        <title>The reference genome sequence of Saccharomyces cerevisiae: Then and now.</title>
        <authorList>
            <person name="Engel S.R."/>
            <person name="Dietrich F.S."/>
            <person name="Fisk D.G."/>
            <person name="Binkley G."/>
            <person name="Balakrishnan R."/>
            <person name="Costanzo M.C."/>
            <person name="Dwight S.S."/>
            <person name="Hitz B.C."/>
            <person name="Karra K."/>
            <person name="Nash R.S."/>
            <person name="Weng S."/>
            <person name="Wong E.D."/>
            <person name="Lloyd P."/>
            <person name="Skrzypek M.S."/>
            <person name="Miyasato S.R."/>
            <person name="Simison M."/>
            <person name="Cherry J.M."/>
        </authorList>
    </citation>
    <scope>GENOME REANNOTATION</scope>
    <source>
        <strain>ATCC 204508 / S288c</strain>
    </source>
</reference>
<reference key="3">
    <citation type="journal article" date="2007" name="Genome Res.">
        <title>Approaching a complete repository of sequence-verified protein-encoding clones for Saccharomyces cerevisiae.</title>
        <authorList>
            <person name="Hu Y."/>
            <person name="Rolfs A."/>
            <person name="Bhullar B."/>
            <person name="Murthy T.V.S."/>
            <person name="Zhu C."/>
            <person name="Berger M.F."/>
            <person name="Camargo A.A."/>
            <person name="Kelley F."/>
            <person name="McCarron S."/>
            <person name="Jepson D."/>
            <person name="Richardson A."/>
            <person name="Raphael J."/>
            <person name="Moreira D."/>
            <person name="Taycher E."/>
            <person name="Zuo D."/>
            <person name="Mohr S."/>
            <person name="Kane M.F."/>
            <person name="Williamson J."/>
            <person name="Simpson A.J.G."/>
            <person name="Bulyk M.L."/>
            <person name="Harlow E."/>
            <person name="Marsischky G."/>
            <person name="Kolodner R.D."/>
            <person name="LaBaer J."/>
        </authorList>
    </citation>
    <scope>NUCLEOTIDE SEQUENCE [GENOMIC DNA]</scope>
    <source>
        <strain>ATCC 204508 / S288c</strain>
    </source>
</reference>
<reference key="4">
    <citation type="journal article" date="1996" name="Yeast">
        <title>PetCR46, a gene which is essential for respiration and integrity of the mitochondrial genome.</title>
        <authorList>
            <person name="Coppee J.-Y."/>
            <person name="Rieger K.-J."/>
            <person name="Kaniak A."/>
            <person name="di Rago J.-P."/>
            <person name="Groudinsky O."/>
            <person name="Slonimski P.P."/>
        </authorList>
    </citation>
    <scope>FUNCTION</scope>
</reference>
<reference key="5">
    <citation type="journal article" date="2002" name="Eur. J. Biochem.">
        <title>Tag-mediated isolation of yeast mitochondrial ribosome and mass spectrometric identification of its new components.</title>
        <authorList>
            <person name="Gan X."/>
            <person name="Kitakawa M."/>
            <person name="Yoshino K."/>
            <person name="Oshiro N."/>
            <person name="Yonezawa K."/>
            <person name="Isono K."/>
        </authorList>
    </citation>
    <scope>IDENTIFICATION IN THE MITOCHONDRIAL RIBOSOMAL LARGE COMPLEX</scope>
    <scope>IDENTIFICATION BY MASS SPECTROMETRY</scope>
</reference>
<reference key="6">
    <citation type="journal article" date="2003" name="Nature">
        <title>Global analysis of protein localization in budding yeast.</title>
        <authorList>
            <person name="Huh W.-K."/>
            <person name="Falvo J.V."/>
            <person name="Gerke L.C."/>
            <person name="Carroll A.S."/>
            <person name="Howson R.W."/>
            <person name="Weissman J.S."/>
            <person name="O'Shea E.K."/>
        </authorList>
    </citation>
    <scope>SUBCELLULAR LOCATION [LARGE SCALE ANALYSIS]</scope>
</reference>
<reference key="7">
    <citation type="journal article" date="2003" name="Nature">
        <title>Global analysis of protein expression in yeast.</title>
        <authorList>
            <person name="Ghaemmaghami S."/>
            <person name="Huh W.-K."/>
            <person name="Bower K."/>
            <person name="Howson R.W."/>
            <person name="Belle A."/>
            <person name="Dephoure N."/>
            <person name="O'Shea E.K."/>
            <person name="Weissman J.S."/>
        </authorList>
    </citation>
    <scope>LEVEL OF PROTEIN EXPRESSION [LARGE SCALE ANALYSIS]</scope>
</reference>
<reference key="8">
    <citation type="journal article" date="2003" name="Proc. Natl. Acad. Sci. U.S.A.">
        <title>The proteome of Saccharomyces cerevisiae mitochondria.</title>
        <authorList>
            <person name="Sickmann A."/>
            <person name="Reinders J."/>
            <person name="Wagner Y."/>
            <person name="Joppich C."/>
            <person name="Zahedi R.P."/>
            <person name="Meyer H.E."/>
            <person name="Schoenfisch B."/>
            <person name="Perschil I."/>
            <person name="Chacinska A."/>
            <person name="Guiard B."/>
            <person name="Rehling P."/>
            <person name="Pfanner N."/>
            <person name="Meisinger C."/>
        </authorList>
    </citation>
    <scope>SUBCELLULAR LOCATION [LARGE SCALE ANALYSIS]</scope>
    <source>
        <strain>ATCC 76625 / YPH499</strain>
    </source>
</reference>
<reference key="9">
    <citation type="journal article" date="2015" name="Nat. Commun.">
        <title>Organization of the mitochondrial translation machinery studied in situ by cryoelectron tomography.</title>
        <authorList>
            <person name="Pfeffer S."/>
            <person name="Woellhaf M.W."/>
            <person name="Herrmann J.M."/>
            <person name="Forster F."/>
        </authorList>
    </citation>
    <scope>SUBCELLULAR LOCATION</scope>
</reference>
<reference key="10">
    <citation type="journal article" date="2014" name="Science">
        <title>Structure of the yeast mitochondrial large ribosomal subunit.</title>
        <authorList>
            <person name="Amunts A."/>
            <person name="Brown A."/>
            <person name="Bai X.C."/>
            <person name="Llacer J.L."/>
            <person name="Hussain T."/>
            <person name="Emsley P."/>
            <person name="Long F."/>
            <person name="Murshudov G."/>
            <person name="Scheres S.H."/>
            <person name="Ramakrishnan V."/>
        </authorList>
    </citation>
    <scope>STRUCTURE BY ELECTRON MICROSCOPY (3.20 ANGSTROMS)</scope>
    <scope>SUBUNIT</scope>
</reference>
<gene>
    <name type="primary">IMG1</name>
    <name type="synonym">PETCR46</name>
    <name type="ordered locus">YCR046C</name>
    <name type="ORF">YCR46C</name>
</gene>
<proteinExistence type="evidence at protein level"/>
<feature type="transit peptide" description="Mitochondrion" evidence="1">
    <location>
        <begin position="1"/>
        <end position="16"/>
    </location>
</feature>
<feature type="chain" id="PRO_0000030477" description="Large ribosomal subunit protein bL19m">
    <location>
        <begin position="17"/>
        <end position="169"/>
    </location>
</feature>
<keyword id="KW-0002">3D-structure</keyword>
<keyword id="KW-0496">Mitochondrion</keyword>
<keyword id="KW-1185">Reference proteome</keyword>
<keyword id="KW-0687">Ribonucleoprotein</keyword>
<keyword id="KW-0689">Ribosomal protein</keyword>
<keyword id="KW-0809">Transit peptide</keyword>
<sequence length="169" mass="19394">MWSRNVRLLGSWTRSYMVPATKRKTIPVYPPVQRIASSQIMKQVALSEIESLDPGAVKRKLISKKNKDRLKAGDVVRIVYDSSKCSYDTFVGYILSIDRKQLVQDASLLLRNQIAKTAVEIRVPLFSPLIERIDLLTPHVSSRQRNKHYYIRGTRLDVGDLEAGLRRKK</sequence>
<evidence type="ECO:0000255" key="1"/>
<evidence type="ECO:0000269" key="2">
    <source>
    </source>
</evidence>
<evidence type="ECO:0000269" key="3">
    <source>
    </source>
</evidence>
<evidence type="ECO:0000269" key="4">
    <source>
    </source>
</evidence>
<evidence type="ECO:0000269" key="5">
    <source>
    </source>
</evidence>
<evidence type="ECO:0000269" key="6">
    <source>
    </source>
</evidence>
<evidence type="ECO:0000269" key="7">
    <source>
    </source>
</evidence>
<evidence type="ECO:0000269" key="8">
    <source>
    </source>
</evidence>
<evidence type="ECO:0000303" key="9">
    <source>
    </source>
</evidence>
<evidence type="ECO:0000305" key="10"/>
<evidence type="ECO:0000305" key="11">
    <source>
    </source>
</evidence>
<evidence type="ECO:0000305" key="12">
    <source>
    </source>
</evidence>
<protein>
    <recommendedName>
        <fullName evidence="9">Large ribosomal subunit protein bL19m</fullName>
    </recommendedName>
    <alternativeName>
        <fullName>54S ribosomal protein IMG1, mitochondrial</fullName>
    </alternativeName>
    <alternativeName>
        <fullName>Integrity of mitochondrial genome protein 1</fullName>
    </alternativeName>
    <alternativeName>
        <fullName>PetCR46</fullName>
    </alternativeName>
</protein>
<accession>P25626</accession>
<accession>D6VR55</accession>
<dbReference type="EMBL" id="X59720">
    <property type="protein sequence ID" value="CAA42294.1"/>
    <property type="molecule type" value="Genomic_DNA"/>
</dbReference>
<dbReference type="EMBL" id="AY692869">
    <property type="protein sequence ID" value="AAT92888.1"/>
    <property type="molecule type" value="Genomic_DNA"/>
</dbReference>
<dbReference type="EMBL" id="BK006937">
    <property type="protein sequence ID" value="DAA07524.1"/>
    <property type="molecule type" value="Genomic_DNA"/>
</dbReference>
<dbReference type="PIR" id="S19459">
    <property type="entry name" value="S19459"/>
</dbReference>
<dbReference type="RefSeq" id="NP_009975.1">
    <property type="nucleotide sequence ID" value="NM_001178760.1"/>
</dbReference>
<dbReference type="PDB" id="3J6B">
    <property type="method" value="EM"/>
    <property type="resolution" value="3.20 A"/>
    <property type="chains" value="M=1-169"/>
</dbReference>
<dbReference type="PDB" id="5MRC">
    <property type="method" value="EM"/>
    <property type="resolution" value="3.25 A"/>
    <property type="chains" value="M=16-166"/>
</dbReference>
<dbReference type="PDB" id="5MRE">
    <property type="method" value="EM"/>
    <property type="resolution" value="3.75 A"/>
    <property type="chains" value="M=16-166"/>
</dbReference>
<dbReference type="PDB" id="5MRF">
    <property type="method" value="EM"/>
    <property type="resolution" value="4.97 A"/>
    <property type="chains" value="M=16-166"/>
</dbReference>
<dbReference type="PDBsum" id="3J6B"/>
<dbReference type="PDBsum" id="5MRC"/>
<dbReference type="PDBsum" id="5MRE"/>
<dbReference type="PDBsum" id="5MRF"/>
<dbReference type="EMDB" id="EMD-3551"/>
<dbReference type="EMDB" id="EMD-3552"/>
<dbReference type="EMDB" id="EMD-3553"/>
<dbReference type="SMR" id="P25626"/>
<dbReference type="BioGRID" id="31028">
    <property type="interactions" value="344"/>
</dbReference>
<dbReference type="ComplexPortal" id="CPX-1602">
    <property type="entry name" value="54S mitochondrial large ribosomal subunit"/>
</dbReference>
<dbReference type="DIP" id="DIP-4995N"/>
<dbReference type="FunCoup" id="P25626">
    <property type="interactions" value="386"/>
</dbReference>
<dbReference type="IntAct" id="P25626">
    <property type="interactions" value="76"/>
</dbReference>
<dbReference type="MINT" id="P25626"/>
<dbReference type="STRING" id="4932.YCR046C"/>
<dbReference type="iPTMnet" id="P25626"/>
<dbReference type="PaxDb" id="4932-YCR046C"/>
<dbReference type="PeptideAtlas" id="P25626"/>
<dbReference type="EnsemblFungi" id="YCR046C_mRNA">
    <property type="protein sequence ID" value="YCR046C"/>
    <property type="gene ID" value="YCR046C"/>
</dbReference>
<dbReference type="GeneID" id="850413"/>
<dbReference type="KEGG" id="sce:YCR046C"/>
<dbReference type="AGR" id="SGD:S000000642"/>
<dbReference type="SGD" id="S000000642">
    <property type="gene designation" value="IMG1"/>
</dbReference>
<dbReference type="VEuPathDB" id="FungiDB:YCR046C"/>
<dbReference type="eggNOG" id="KOG1698">
    <property type="taxonomic scope" value="Eukaryota"/>
</dbReference>
<dbReference type="HOGENOM" id="CLU_076387_2_0_1"/>
<dbReference type="InParanoid" id="P25626"/>
<dbReference type="OMA" id="TYVELRV"/>
<dbReference type="OrthoDB" id="432645at2759"/>
<dbReference type="BioCyc" id="YEAST:G3O-29357-MONOMER"/>
<dbReference type="BioGRID-ORCS" id="850413">
    <property type="hits" value="9 hits in 10 CRISPR screens"/>
</dbReference>
<dbReference type="PRO" id="PR:P25626"/>
<dbReference type="Proteomes" id="UP000002311">
    <property type="component" value="Chromosome III"/>
</dbReference>
<dbReference type="RNAct" id="P25626">
    <property type="molecule type" value="protein"/>
</dbReference>
<dbReference type="GO" id="GO:0005743">
    <property type="term" value="C:mitochondrial inner membrane"/>
    <property type="evidence" value="ECO:0000303"/>
    <property type="project" value="ComplexPortal"/>
</dbReference>
<dbReference type="GO" id="GO:0005762">
    <property type="term" value="C:mitochondrial large ribosomal subunit"/>
    <property type="evidence" value="ECO:0000314"/>
    <property type="project" value="SGD"/>
</dbReference>
<dbReference type="GO" id="GO:0005739">
    <property type="term" value="C:mitochondrion"/>
    <property type="evidence" value="ECO:0007005"/>
    <property type="project" value="SGD"/>
</dbReference>
<dbReference type="GO" id="GO:0003735">
    <property type="term" value="F:structural constituent of ribosome"/>
    <property type="evidence" value="ECO:0000314"/>
    <property type="project" value="SGD"/>
</dbReference>
<dbReference type="GO" id="GO:0032543">
    <property type="term" value="P:mitochondrial translation"/>
    <property type="evidence" value="ECO:0000303"/>
    <property type="project" value="ComplexPortal"/>
</dbReference>
<dbReference type="FunFam" id="2.30.30.790:FF:000010">
    <property type="entry name" value="Mitochondrial ribosomal protein"/>
    <property type="match status" value="1"/>
</dbReference>
<dbReference type="Gene3D" id="2.30.30.790">
    <property type="match status" value="1"/>
</dbReference>
<dbReference type="InterPro" id="IPR001857">
    <property type="entry name" value="Ribosomal_bL19"/>
</dbReference>
<dbReference type="InterPro" id="IPR038657">
    <property type="entry name" value="Ribosomal_bL19_sf"/>
</dbReference>
<dbReference type="InterPro" id="IPR008991">
    <property type="entry name" value="Translation_prot_SH3-like_sf"/>
</dbReference>
<dbReference type="PANTHER" id="PTHR15680:SF9">
    <property type="entry name" value="LARGE RIBOSOMAL SUBUNIT PROTEIN BL19M"/>
    <property type="match status" value="1"/>
</dbReference>
<dbReference type="PANTHER" id="PTHR15680">
    <property type="entry name" value="RIBOSOMAL PROTEIN L19"/>
    <property type="match status" value="1"/>
</dbReference>
<dbReference type="Pfam" id="PF01245">
    <property type="entry name" value="Ribosomal_L19"/>
    <property type="match status" value="1"/>
</dbReference>
<dbReference type="SUPFAM" id="SSF50104">
    <property type="entry name" value="Translation proteins SH3-like domain"/>
    <property type="match status" value="1"/>
</dbReference>
<organism>
    <name type="scientific">Saccharomyces cerevisiae (strain ATCC 204508 / S288c)</name>
    <name type="common">Baker's yeast</name>
    <dbReference type="NCBI Taxonomy" id="559292"/>
    <lineage>
        <taxon>Eukaryota</taxon>
        <taxon>Fungi</taxon>
        <taxon>Dikarya</taxon>
        <taxon>Ascomycota</taxon>
        <taxon>Saccharomycotina</taxon>
        <taxon>Saccharomycetes</taxon>
        <taxon>Saccharomycetales</taxon>
        <taxon>Saccharomycetaceae</taxon>
        <taxon>Saccharomyces</taxon>
    </lineage>
</organism>
<comment type="function">
    <text evidence="8 11 12">Component of the mitochondrial ribosome (mitoribosome), a dedicated translation machinery responsible for the synthesis of mitochondrial genome-encoded proteins, including at least some of the essential transmembrane subunits of the mitochondrial respiratory chain. The mitoribosomes are attached to the mitochondrial inner membrane and translation products are cotranslationally integrated into the membrane (PubMed:24675956, PubMed:25609543). bL19m is essential for respiration (PubMed:8771712).</text>
</comment>
<comment type="subunit">
    <text evidence="2 6">Component of the mitochondrial large ribosomal subunit (mt-LSU). Mature yeast 74S mitochondrial ribosomes consist of a small (37S) and a large (54S) subunit. The 37S small subunit contains a 15S ribosomal RNA (15S mt-rRNA) and 34 different proteins. The 54S large subunit contains a 21S rRNA (21S mt-rRNA) and 46 different proteins.</text>
</comment>
<comment type="subcellular location">
    <subcellularLocation>
        <location evidence="3 5">Mitochondrion</location>
    </subcellularLocation>
    <text evidence="7">Mitoribosomes are tethered to the mitochondrial inner membrane and spatially aligned with the membrane insertion machinery through two distinct membrane contact sites, formed by the 21S rRNA expansion segment 96-ES1 and the inner membrane protein MBA1.</text>
</comment>
<comment type="miscellaneous">
    <text evidence="4">Present with 4150 molecules/cell in log phase SD medium.</text>
</comment>
<comment type="similarity">
    <text evidence="10">Belongs to the bacterial ribosomal protein bL19 family.</text>
</comment>
<name>IMG1_YEAST</name>